<sequence>MITRLGLIDYGMGNLRSVQIAFERLHKALHIVRQPADLSRCDALILPGVGAFDPAMVHLEQTRLVPDLKSWVKGGRPLLGICLGLQLLFESSDEGNATGLGLLKGHVQRLPSNQGERIPHMGWAALEHRNDCPLLDKEDPDSWMYFVHSYAAVPSQNSDLAAIAPFGRDNITAMVWKGRLGACQFHPEKSAAAGERMLRRWLNWLETGAKPVP</sequence>
<feature type="chain" id="PRO_0000152406" description="Imidazole glycerol phosphate synthase subunit HisH 2">
    <location>
        <begin position="1"/>
        <end position="213"/>
    </location>
</feature>
<feature type="domain" description="Glutamine amidotransferase type-1">
    <location>
        <begin position="4"/>
        <end position="211"/>
    </location>
</feature>
<feature type="active site" description="Nucleophile" evidence="1">
    <location>
        <position position="82"/>
    </location>
</feature>
<feature type="active site" evidence="1">
    <location>
        <position position="186"/>
    </location>
</feature>
<feature type="active site" evidence="1">
    <location>
        <position position="188"/>
    </location>
</feature>
<accession>Q7V6M5</accession>
<keyword id="KW-0028">Amino-acid biosynthesis</keyword>
<keyword id="KW-0963">Cytoplasm</keyword>
<keyword id="KW-0315">Glutamine amidotransferase</keyword>
<keyword id="KW-0368">Histidine biosynthesis</keyword>
<keyword id="KW-0378">Hydrolase</keyword>
<keyword id="KW-0456">Lyase</keyword>
<keyword id="KW-1185">Reference proteome</keyword>
<proteinExistence type="inferred from homology"/>
<organism>
    <name type="scientific">Prochlorococcus marinus (strain MIT 9313)</name>
    <dbReference type="NCBI Taxonomy" id="74547"/>
    <lineage>
        <taxon>Bacteria</taxon>
        <taxon>Bacillati</taxon>
        <taxon>Cyanobacteriota</taxon>
        <taxon>Cyanophyceae</taxon>
        <taxon>Synechococcales</taxon>
        <taxon>Prochlorococcaceae</taxon>
        <taxon>Prochlorococcus</taxon>
    </lineage>
</organism>
<dbReference type="EC" id="4.3.2.10"/>
<dbReference type="EC" id="3.5.1.2"/>
<dbReference type="EMBL" id="BX548175">
    <property type="protein sequence ID" value="CAE21303.1"/>
    <property type="molecule type" value="Genomic_DNA"/>
</dbReference>
<dbReference type="SMR" id="Q7V6M5"/>
<dbReference type="KEGG" id="pmt:PMT_1128"/>
<dbReference type="eggNOG" id="COG0118">
    <property type="taxonomic scope" value="Bacteria"/>
</dbReference>
<dbReference type="HOGENOM" id="CLU_071837_2_2_3"/>
<dbReference type="OrthoDB" id="9807137at2"/>
<dbReference type="UniPathway" id="UPA00031">
    <property type="reaction ID" value="UER00010"/>
</dbReference>
<dbReference type="Proteomes" id="UP000001423">
    <property type="component" value="Chromosome"/>
</dbReference>
<dbReference type="GO" id="GO:0005737">
    <property type="term" value="C:cytoplasm"/>
    <property type="evidence" value="ECO:0007669"/>
    <property type="project" value="UniProtKB-SubCell"/>
</dbReference>
<dbReference type="GO" id="GO:0004359">
    <property type="term" value="F:glutaminase activity"/>
    <property type="evidence" value="ECO:0007669"/>
    <property type="project" value="UniProtKB-EC"/>
</dbReference>
<dbReference type="GO" id="GO:0000107">
    <property type="term" value="F:imidazoleglycerol-phosphate synthase activity"/>
    <property type="evidence" value="ECO:0007669"/>
    <property type="project" value="UniProtKB-UniRule"/>
</dbReference>
<dbReference type="GO" id="GO:0016829">
    <property type="term" value="F:lyase activity"/>
    <property type="evidence" value="ECO:0007669"/>
    <property type="project" value="UniProtKB-KW"/>
</dbReference>
<dbReference type="GO" id="GO:0000105">
    <property type="term" value="P:L-histidine biosynthetic process"/>
    <property type="evidence" value="ECO:0007669"/>
    <property type="project" value="UniProtKB-UniRule"/>
</dbReference>
<dbReference type="CDD" id="cd01748">
    <property type="entry name" value="GATase1_IGP_Synthase"/>
    <property type="match status" value="1"/>
</dbReference>
<dbReference type="Gene3D" id="3.40.50.880">
    <property type="match status" value="1"/>
</dbReference>
<dbReference type="HAMAP" id="MF_00278">
    <property type="entry name" value="HisH"/>
    <property type="match status" value="1"/>
</dbReference>
<dbReference type="InterPro" id="IPR029062">
    <property type="entry name" value="Class_I_gatase-like"/>
</dbReference>
<dbReference type="InterPro" id="IPR017926">
    <property type="entry name" value="GATASE"/>
</dbReference>
<dbReference type="InterPro" id="IPR010139">
    <property type="entry name" value="Imidazole-glycPsynth_HisH"/>
</dbReference>
<dbReference type="NCBIfam" id="TIGR01855">
    <property type="entry name" value="IMP_synth_hisH"/>
    <property type="match status" value="1"/>
</dbReference>
<dbReference type="PANTHER" id="PTHR42701">
    <property type="entry name" value="IMIDAZOLE GLYCEROL PHOSPHATE SYNTHASE SUBUNIT HISH"/>
    <property type="match status" value="1"/>
</dbReference>
<dbReference type="PANTHER" id="PTHR42701:SF1">
    <property type="entry name" value="IMIDAZOLE GLYCEROL PHOSPHATE SYNTHASE SUBUNIT HISH"/>
    <property type="match status" value="1"/>
</dbReference>
<dbReference type="Pfam" id="PF00117">
    <property type="entry name" value="GATase"/>
    <property type="match status" value="1"/>
</dbReference>
<dbReference type="PIRSF" id="PIRSF000495">
    <property type="entry name" value="Amidotransf_hisH"/>
    <property type="match status" value="1"/>
</dbReference>
<dbReference type="SUPFAM" id="SSF52317">
    <property type="entry name" value="Class I glutamine amidotransferase-like"/>
    <property type="match status" value="1"/>
</dbReference>
<dbReference type="PROSITE" id="PS51273">
    <property type="entry name" value="GATASE_TYPE_1"/>
    <property type="match status" value="1"/>
</dbReference>
<reference key="1">
    <citation type="journal article" date="2003" name="Nature">
        <title>Genome divergence in two Prochlorococcus ecotypes reflects oceanic niche differentiation.</title>
        <authorList>
            <person name="Rocap G."/>
            <person name="Larimer F.W."/>
            <person name="Lamerdin J.E."/>
            <person name="Malfatti S."/>
            <person name="Chain P."/>
            <person name="Ahlgren N.A."/>
            <person name="Arellano A."/>
            <person name="Coleman M."/>
            <person name="Hauser L."/>
            <person name="Hess W.R."/>
            <person name="Johnson Z.I."/>
            <person name="Land M.L."/>
            <person name="Lindell D."/>
            <person name="Post A.F."/>
            <person name="Regala W."/>
            <person name="Shah M."/>
            <person name="Shaw S.L."/>
            <person name="Steglich C."/>
            <person name="Sullivan M.B."/>
            <person name="Ting C.S."/>
            <person name="Tolonen A."/>
            <person name="Webb E.A."/>
            <person name="Zinser E.R."/>
            <person name="Chisholm S.W."/>
        </authorList>
    </citation>
    <scope>NUCLEOTIDE SEQUENCE [LARGE SCALE GENOMIC DNA]</scope>
    <source>
        <strain>MIT 9313</strain>
    </source>
</reference>
<evidence type="ECO:0000250" key="1"/>
<protein>
    <recommendedName>
        <fullName>Imidazole glycerol phosphate synthase subunit HisH 2</fullName>
        <ecNumber>4.3.2.10</ecNumber>
    </recommendedName>
    <alternativeName>
        <fullName>IGP synthase glutaminase subunit 2</fullName>
        <ecNumber>3.5.1.2</ecNumber>
    </alternativeName>
    <alternativeName>
        <fullName>IGP synthase subunit HisH 2</fullName>
    </alternativeName>
    <alternativeName>
        <fullName>ImGP synthase subunit HisH 2</fullName>
        <shortName>IGPS subunit HisH 2</shortName>
    </alternativeName>
</protein>
<comment type="function">
    <text evidence="1">IGPS catalyzes the conversion of PRFAR and glutamine to IGP, AICAR and glutamate. The HisH subunit provides the glutamine amidotransferase activity that produces the ammonia necessary to HisF for the synthesis of IGP and AICAR (By similarity).</text>
</comment>
<comment type="catalytic activity">
    <reaction>
        <text>5-[(5-phospho-1-deoxy-D-ribulos-1-ylimino)methylamino]-1-(5-phospho-beta-D-ribosyl)imidazole-4-carboxamide + L-glutamine = D-erythro-1-(imidazol-4-yl)glycerol 3-phosphate + 5-amino-1-(5-phospho-beta-D-ribosyl)imidazole-4-carboxamide + L-glutamate + H(+)</text>
        <dbReference type="Rhea" id="RHEA:24793"/>
        <dbReference type="ChEBI" id="CHEBI:15378"/>
        <dbReference type="ChEBI" id="CHEBI:29985"/>
        <dbReference type="ChEBI" id="CHEBI:58278"/>
        <dbReference type="ChEBI" id="CHEBI:58359"/>
        <dbReference type="ChEBI" id="CHEBI:58475"/>
        <dbReference type="ChEBI" id="CHEBI:58525"/>
        <dbReference type="EC" id="4.3.2.10"/>
    </reaction>
</comment>
<comment type="catalytic activity">
    <reaction>
        <text>L-glutamine + H2O = L-glutamate + NH4(+)</text>
        <dbReference type="Rhea" id="RHEA:15889"/>
        <dbReference type="ChEBI" id="CHEBI:15377"/>
        <dbReference type="ChEBI" id="CHEBI:28938"/>
        <dbReference type="ChEBI" id="CHEBI:29985"/>
        <dbReference type="ChEBI" id="CHEBI:58359"/>
        <dbReference type="EC" id="3.5.1.2"/>
    </reaction>
</comment>
<comment type="pathway">
    <text>Amino-acid biosynthesis; L-histidine biosynthesis; L-histidine from 5-phospho-alpha-D-ribose 1-diphosphate: step 5/9.</text>
</comment>
<comment type="subunit">
    <text evidence="1">Heterodimer of HisH and HisF.</text>
</comment>
<comment type="subcellular location">
    <subcellularLocation>
        <location evidence="1">Cytoplasm</location>
    </subcellularLocation>
</comment>
<name>HIS52_PROMM</name>
<gene>
    <name type="primary">hisH2</name>
    <name type="ordered locus">PMT_1128</name>
</gene>